<keyword id="KW-0002">3D-structure</keyword>
<keyword id="KW-0007">Acetylation</keyword>
<keyword id="KW-0028">Amino-acid biosynthesis</keyword>
<keyword id="KW-0032">Aminotransferase</keyword>
<keyword id="KW-0963">Cytoplasm</keyword>
<keyword id="KW-0903">Direct protein sequencing</keyword>
<keyword id="KW-0663">Pyridoxal phosphate</keyword>
<keyword id="KW-1185">Reference proteome</keyword>
<keyword id="KW-0808">Transferase</keyword>
<protein>
    <recommendedName>
        <fullName evidence="2">Aspartate aminotransferase, cytoplasmic</fullName>
        <shortName>cAspAT</shortName>
        <ecNumber evidence="1">2.6.1.1</ecNumber>
        <ecNumber evidence="1">2.6.1.3</ecNumber>
    </recommendedName>
    <alternativeName>
        <fullName>Cysteine aminotransferase, cytoplasmic</fullName>
    </alternativeName>
    <alternativeName>
        <fullName>Cysteine transaminase, cytoplasmic</fullName>
        <shortName>cCAT</shortName>
    </alternativeName>
    <alternativeName>
        <fullName>Glutamate oxaloacetate transaminase 1</fullName>
    </alternativeName>
    <alternativeName>
        <fullName>Transaminase A</fullName>
    </alternativeName>
</protein>
<proteinExistence type="evidence at protein level"/>
<gene>
    <name evidence="2" type="primary">GOT1</name>
</gene>
<evidence type="ECO:0000250" key="1">
    <source>
        <dbReference type="UniProtKB" id="P13221"/>
    </source>
</evidence>
<evidence type="ECO:0000250" key="2">
    <source>
        <dbReference type="UniProtKB" id="P17174"/>
    </source>
</evidence>
<evidence type="ECO:0000269" key="3">
    <source>
    </source>
</evidence>
<evidence type="ECO:0000269" key="4">
    <source>
    </source>
</evidence>
<evidence type="ECO:0000269" key="5">
    <source>
    </source>
</evidence>
<evidence type="ECO:0000269" key="6">
    <source ref="3"/>
</evidence>
<evidence type="ECO:0000305" key="7"/>
<evidence type="ECO:0007829" key="8">
    <source>
        <dbReference type="PDB" id="2CST"/>
    </source>
</evidence>
<name>AATC_CHICK</name>
<accession>P00504</accession>
<dbReference type="EC" id="2.6.1.1" evidence="1"/>
<dbReference type="EC" id="2.6.1.3" evidence="1"/>
<dbReference type="EMBL" id="X15636">
    <property type="protein sequence ID" value="CAA33646.1"/>
    <property type="molecule type" value="mRNA"/>
</dbReference>
<dbReference type="PIR" id="S05583">
    <property type="entry name" value="XNCHDC"/>
</dbReference>
<dbReference type="RefSeq" id="NP_990652.1">
    <property type="nucleotide sequence ID" value="NM_205321.2"/>
</dbReference>
<dbReference type="PDB" id="1AAT">
    <property type="method" value="X-ray"/>
    <property type="resolution" value="2.80 A"/>
    <property type="chains" value="A/B=2-412"/>
</dbReference>
<dbReference type="PDB" id="2CST">
    <property type="method" value="X-ray"/>
    <property type="resolution" value="1.90 A"/>
    <property type="chains" value="A/B=2-412"/>
</dbReference>
<dbReference type="PDBsum" id="1AAT"/>
<dbReference type="PDBsum" id="2CST"/>
<dbReference type="SMR" id="P00504"/>
<dbReference type="FunCoup" id="P00504">
    <property type="interactions" value="2291"/>
</dbReference>
<dbReference type="STRING" id="9031.ENSGALP00000012086"/>
<dbReference type="GlyGen" id="P00504">
    <property type="glycosylation" value="1 site"/>
</dbReference>
<dbReference type="iPTMnet" id="P00504"/>
<dbReference type="PaxDb" id="9031-ENSGALP00000012086"/>
<dbReference type="Ensembl" id="ENSGALT00010044218.1">
    <property type="protein sequence ID" value="ENSGALP00010026301.1"/>
    <property type="gene ID" value="ENSGALG00010018323.1"/>
</dbReference>
<dbReference type="GeneID" id="396261"/>
<dbReference type="KEGG" id="gga:396261"/>
<dbReference type="CTD" id="2805"/>
<dbReference type="VEuPathDB" id="HostDB:geneid_396261"/>
<dbReference type="eggNOG" id="KOG1412">
    <property type="taxonomic scope" value="Eukaryota"/>
</dbReference>
<dbReference type="GeneTree" id="ENSGT00950000183082"/>
<dbReference type="InParanoid" id="P00504"/>
<dbReference type="OMA" id="GTWTHIT"/>
<dbReference type="OrthoDB" id="6752799at2759"/>
<dbReference type="PhylomeDB" id="P00504"/>
<dbReference type="Reactome" id="R-GGA-352875">
    <property type="pathway name" value="Gluconeogenesis"/>
</dbReference>
<dbReference type="Reactome" id="R-GGA-372568">
    <property type="pathway name" value="Amino acid metabolism"/>
</dbReference>
<dbReference type="EvolutionaryTrace" id="P00504"/>
<dbReference type="PRO" id="PR:P00504"/>
<dbReference type="Proteomes" id="UP000000539">
    <property type="component" value="Chromosome 6"/>
</dbReference>
<dbReference type="GO" id="GO:0005829">
    <property type="term" value="C:cytosol"/>
    <property type="evidence" value="ECO:0000318"/>
    <property type="project" value="GO_Central"/>
</dbReference>
<dbReference type="GO" id="GO:0004069">
    <property type="term" value="F:L-aspartate:2-oxoglutarate aminotransferase activity"/>
    <property type="evidence" value="ECO:0000250"/>
    <property type="project" value="UniProtKB"/>
</dbReference>
<dbReference type="GO" id="GO:0047801">
    <property type="term" value="F:L-cysteine transaminase activity"/>
    <property type="evidence" value="ECO:0000250"/>
    <property type="project" value="UniProtKB"/>
</dbReference>
<dbReference type="GO" id="GO:0004609">
    <property type="term" value="F:phosphatidylserine decarboxylase activity"/>
    <property type="evidence" value="ECO:0007669"/>
    <property type="project" value="Ensembl"/>
</dbReference>
<dbReference type="GO" id="GO:0030170">
    <property type="term" value="F:pyridoxal phosphate binding"/>
    <property type="evidence" value="ECO:0007669"/>
    <property type="project" value="InterPro"/>
</dbReference>
<dbReference type="GO" id="GO:0006103">
    <property type="term" value="P:2-oxoglutarate metabolic process"/>
    <property type="evidence" value="ECO:0000250"/>
    <property type="project" value="UniProtKB"/>
</dbReference>
<dbReference type="GO" id="GO:0006532">
    <property type="term" value="P:aspartate biosynthetic process"/>
    <property type="evidence" value="ECO:0000318"/>
    <property type="project" value="GO_Central"/>
</dbReference>
<dbReference type="GO" id="GO:0006533">
    <property type="term" value="P:aspartate catabolic process"/>
    <property type="evidence" value="ECO:0007669"/>
    <property type="project" value="Ensembl"/>
</dbReference>
<dbReference type="GO" id="GO:0006531">
    <property type="term" value="P:aspartate metabolic process"/>
    <property type="evidence" value="ECO:0000250"/>
    <property type="project" value="UniProtKB"/>
</dbReference>
<dbReference type="GO" id="GO:0032869">
    <property type="term" value="P:cellular response to insulin stimulus"/>
    <property type="evidence" value="ECO:0007669"/>
    <property type="project" value="Ensembl"/>
</dbReference>
<dbReference type="GO" id="GO:0055089">
    <property type="term" value="P:fatty acid homeostasis"/>
    <property type="evidence" value="ECO:0007669"/>
    <property type="project" value="Ensembl"/>
</dbReference>
<dbReference type="GO" id="GO:0006094">
    <property type="term" value="P:gluconeogenesis"/>
    <property type="evidence" value="ECO:0007669"/>
    <property type="project" value="Ensembl"/>
</dbReference>
<dbReference type="GO" id="GO:0019550">
    <property type="term" value="P:glutamate catabolic process to aspartate"/>
    <property type="evidence" value="ECO:0007669"/>
    <property type="project" value="Ensembl"/>
</dbReference>
<dbReference type="GO" id="GO:0006536">
    <property type="term" value="P:glutamate metabolic process"/>
    <property type="evidence" value="ECO:0000250"/>
    <property type="project" value="UniProtKB"/>
</dbReference>
<dbReference type="GO" id="GO:0006114">
    <property type="term" value="P:glycerol biosynthetic process"/>
    <property type="evidence" value="ECO:0000250"/>
    <property type="project" value="UniProtKB"/>
</dbReference>
<dbReference type="GO" id="GO:0043490">
    <property type="term" value="P:malate-aspartate shuttle"/>
    <property type="evidence" value="ECO:0007669"/>
    <property type="project" value="Ensembl"/>
</dbReference>
<dbReference type="GO" id="GO:0007219">
    <property type="term" value="P:Notch signaling pathway"/>
    <property type="evidence" value="ECO:0007669"/>
    <property type="project" value="Ensembl"/>
</dbReference>
<dbReference type="GO" id="GO:0006107">
    <property type="term" value="P:oxaloacetate metabolic process"/>
    <property type="evidence" value="ECO:0007669"/>
    <property type="project" value="Ensembl"/>
</dbReference>
<dbReference type="GO" id="GO:0051384">
    <property type="term" value="P:response to glucocorticoid"/>
    <property type="evidence" value="ECO:0007669"/>
    <property type="project" value="Ensembl"/>
</dbReference>
<dbReference type="CDD" id="cd00609">
    <property type="entry name" value="AAT_like"/>
    <property type="match status" value="1"/>
</dbReference>
<dbReference type="FunFam" id="3.40.640.10:FF:000044">
    <property type="entry name" value="Aspartate aminotransferase"/>
    <property type="match status" value="1"/>
</dbReference>
<dbReference type="FunFam" id="3.90.1150.10:FF:000001">
    <property type="entry name" value="Aspartate aminotransferase"/>
    <property type="match status" value="1"/>
</dbReference>
<dbReference type="Gene3D" id="3.90.1150.10">
    <property type="entry name" value="Aspartate Aminotransferase, domain 1"/>
    <property type="match status" value="1"/>
</dbReference>
<dbReference type="Gene3D" id="3.40.640.10">
    <property type="entry name" value="Type I PLP-dependent aspartate aminotransferase-like (Major domain)"/>
    <property type="match status" value="1"/>
</dbReference>
<dbReference type="InterPro" id="IPR004839">
    <property type="entry name" value="Aminotransferase_I/II_large"/>
</dbReference>
<dbReference type="InterPro" id="IPR000796">
    <property type="entry name" value="Asp_trans"/>
</dbReference>
<dbReference type="InterPro" id="IPR004838">
    <property type="entry name" value="NHTrfase_class1_PyrdxlP-BS"/>
</dbReference>
<dbReference type="InterPro" id="IPR015424">
    <property type="entry name" value="PyrdxlP-dep_Trfase"/>
</dbReference>
<dbReference type="InterPro" id="IPR015421">
    <property type="entry name" value="PyrdxlP-dep_Trfase_major"/>
</dbReference>
<dbReference type="InterPro" id="IPR015422">
    <property type="entry name" value="PyrdxlP-dep_Trfase_small"/>
</dbReference>
<dbReference type="NCBIfam" id="NF006719">
    <property type="entry name" value="PRK09257.1"/>
    <property type="match status" value="1"/>
</dbReference>
<dbReference type="PANTHER" id="PTHR11879">
    <property type="entry name" value="ASPARTATE AMINOTRANSFERASE"/>
    <property type="match status" value="1"/>
</dbReference>
<dbReference type="PANTHER" id="PTHR11879:SF3">
    <property type="entry name" value="ASPARTATE AMINOTRANSFERASE, CYTOPLASMIC"/>
    <property type="match status" value="1"/>
</dbReference>
<dbReference type="Pfam" id="PF00155">
    <property type="entry name" value="Aminotran_1_2"/>
    <property type="match status" value="1"/>
</dbReference>
<dbReference type="PRINTS" id="PR00799">
    <property type="entry name" value="TRANSAMINASE"/>
</dbReference>
<dbReference type="SUPFAM" id="SSF53383">
    <property type="entry name" value="PLP-dependent transferases"/>
    <property type="match status" value="1"/>
</dbReference>
<dbReference type="PROSITE" id="PS00105">
    <property type="entry name" value="AA_TRANSFER_CLASS_1"/>
    <property type="match status" value="1"/>
</dbReference>
<sequence length="412" mass="45935">MAASIFAAVPRAPPVAVFKLTADFREDGDSRKVNLGVGAYRTDEGQPWVLPVVRKVEQLIAGDGSLNHEYLPILGLPEFRANASRIALGDDSPAIAQKRVGSVQGLGGTGALRIGAEFLRRWYNGNNNTATPVYVSSPTWENHNSVFMDAGFKDIRTYRYWDAAKRGLDLQGLLDDMEKAPEFSIFILHACAHNPTGTDPTPDEWKQIAAVMKRRCLFPFFDSAYQGFASGSLDKDAWAVRYFVSEGFELFCAQSFSKNFGLYNERVGNLSVVGKDEDNVQRVLSQMEKIVRTTWSNPPSQGARIVATTLTSPQLFAEWKDNVKTMADRVLLMRSELRSRLESLGTPGTWNHITDQIGMFSFTGLNPKQVEYMIKEKHIYLMASGRINMCGLTTKNLDYVAKSIHEAVTKIQ</sequence>
<feature type="initiator methionine" description="Removed" evidence="3 6">
    <location>
        <position position="1"/>
    </location>
</feature>
<feature type="chain" id="PRO_0000123884" description="Aspartate aminotransferase, cytoplasmic">
    <location>
        <begin position="2"/>
        <end position="412"/>
    </location>
</feature>
<feature type="binding site">
    <location>
        <position position="38"/>
    </location>
    <ligand>
        <name>L-aspartate</name>
        <dbReference type="ChEBI" id="CHEBI:29991"/>
    </ligand>
</feature>
<feature type="binding site">
    <location>
        <position position="140"/>
    </location>
    <ligand>
        <name>L-aspartate</name>
        <dbReference type="ChEBI" id="CHEBI:29991"/>
    </ligand>
</feature>
<feature type="binding site">
    <location>
        <position position="194"/>
    </location>
    <ligand>
        <name>L-aspartate</name>
        <dbReference type="ChEBI" id="CHEBI:29991"/>
    </ligand>
</feature>
<feature type="binding site">
    <location>
        <position position="386"/>
    </location>
    <ligand>
        <name>L-aspartate</name>
        <dbReference type="ChEBI" id="CHEBI:29991"/>
    </ligand>
</feature>
<feature type="modified residue" description="N-acetylalanine" evidence="3">
    <location>
        <position position="2"/>
    </location>
</feature>
<feature type="modified residue" description="N6-(pyridoxal phosphate)lysine">
    <location>
        <position position="258"/>
    </location>
</feature>
<feature type="sequence conflict" description="In Ref. 2; AA sequence and 3; AA sequence." evidence="7" ref="2 3">
    <original>D</original>
    <variation>N</variation>
    <location>
        <position position="63"/>
    </location>
</feature>
<feature type="sequence conflict" description="In Ref. 2; AA sequence and 3; AA sequence." evidence="7" ref="2 3">
    <location>
        <position position="121"/>
    </location>
</feature>
<feature type="sequence conflict" description="In Ref. 3; AA sequence." evidence="7" ref="3">
    <original>W</original>
    <variation>S</variation>
    <location>
        <position position="140"/>
    </location>
</feature>
<feature type="sequence conflict" description="In Ref. 2; AA sequence and 3; AA sequence." evidence="7" ref="2 3">
    <original>D</original>
    <variation>S</variation>
    <location>
        <position position="175"/>
    </location>
</feature>
<feature type="sequence conflict" description="In Ref. 2; AA sequence and 3; AA sequence." evidence="7" ref="2 3">
    <original>SLD</original>
    <variation>NLE</variation>
    <location>
        <begin position="232"/>
        <end position="234"/>
    </location>
</feature>
<feature type="turn" evidence="8">
    <location>
        <begin position="5"/>
        <end position="8"/>
    </location>
</feature>
<feature type="helix" evidence="8">
    <location>
        <begin position="16"/>
        <end position="26"/>
    </location>
</feature>
<feature type="helix" evidence="8">
    <location>
        <begin position="51"/>
        <end position="62"/>
    </location>
</feature>
<feature type="helix" evidence="8">
    <location>
        <begin position="77"/>
        <end position="88"/>
    </location>
</feature>
<feature type="helix" evidence="8">
    <location>
        <begin position="93"/>
        <end position="96"/>
    </location>
</feature>
<feature type="strand" evidence="8">
    <location>
        <begin position="100"/>
        <end position="106"/>
    </location>
</feature>
<feature type="helix" evidence="8">
    <location>
        <begin position="107"/>
        <end position="122"/>
    </location>
</feature>
<feature type="strand" evidence="8">
    <location>
        <begin position="123"/>
        <end position="127"/>
    </location>
</feature>
<feature type="strand" evidence="8">
    <location>
        <begin position="133"/>
        <end position="138"/>
    </location>
</feature>
<feature type="helix" evidence="8">
    <location>
        <begin position="142"/>
        <end position="149"/>
    </location>
</feature>
<feature type="strand" evidence="8">
    <location>
        <begin position="155"/>
        <end position="158"/>
    </location>
</feature>
<feature type="turn" evidence="8">
    <location>
        <begin position="163"/>
        <end position="166"/>
    </location>
</feature>
<feature type="helix" evidence="8">
    <location>
        <begin position="170"/>
        <end position="178"/>
    </location>
</feature>
<feature type="strand" evidence="8">
    <location>
        <begin position="185"/>
        <end position="192"/>
    </location>
</feature>
<feature type="turn" evidence="8">
    <location>
        <begin position="194"/>
        <end position="196"/>
    </location>
</feature>
<feature type="helix" evidence="8">
    <location>
        <begin position="202"/>
        <end position="215"/>
    </location>
</feature>
<feature type="strand" evidence="8">
    <location>
        <begin position="218"/>
        <end position="224"/>
    </location>
</feature>
<feature type="turn" evidence="8">
    <location>
        <begin position="226"/>
        <end position="230"/>
    </location>
</feature>
<feature type="helix" evidence="8">
    <location>
        <begin position="233"/>
        <end position="236"/>
    </location>
</feature>
<feature type="helix" evidence="8">
    <location>
        <begin position="238"/>
        <end position="245"/>
    </location>
</feature>
<feature type="strand" evidence="8">
    <location>
        <begin position="250"/>
        <end position="255"/>
    </location>
</feature>
<feature type="turn" evidence="8">
    <location>
        <begin position="257"/>
        <end position="259"/>
    </location>
</feature>
<feature type="helix" evidence="8">
    <location>
        <begin position="263"/>
        <end position="265"/>
    </location>
</feature>
<feature type="strand" evidence="8">
    <location>
        <begin position="267"/>
        <end position="273"/>
    </location>
</feature>
<feature type="helix" evidence="8">
    <location>
        <begin position="277"/>
        <end position="292"/>
    </location>
</feature>
<feature type="turn" evidence="8">
    <location>
        <begin position="293"/>
        <end position="295"/>
    </location>
</feature>
<feature type="helix" evidence="8">
    <location>
        <begin position="301"/>
        <end position="311"/>
    </location>
</feature>
<feature type="helix" evidence="8">
    <location>
        <begin position="313"/>
        <end position="344"/>
    </location>
</feature>
<feature type="helix" evidence="8">
    <location>
        <begin position="352"/>
        <end position="355"/>
    </location>
</feature>
<feature type="strand" evidence="8">
    <location>
        <begin position="358"/>
        <end position="362"/>
    </location>
</feature>
<feature type="helix" evidence="8">
    <location>
        <begin position="367"/>
        <end position="375"/>
    </location>
</feature>
<feature type="strand" evidence="8">
    <location>
        <begin position="386"/>
        <end position="388"/>
    </location>
</feature>
<feature type="helix" evidence="8">
    <location>
        <begin position="389"/>
        <end position="391"/>
    </location>
</feature>
<feature type="turn" evidence="8">
    <location>
        <begin position="394"/>
        <end position="396"/>
    </location>
</feature>
<feature type="helix" evidence="8">
    <location>
        <begin position="397"/>
        <end position="410"/>
    </location>
</feature>
<organism>
    <name type="scientific">Gallus gallus</name>
    <name type="common">Chicken</name>
    <dbReference type="NCBI Taxonomy" id="9031"/>
    <lineage>
        <taxon>Eukaryota</taxon>
        <taxon>Metazoa</taxon>
        <taxon>Chordata</taxon>
        <taxon>Craniata</taxon>
        <taxon>Vertebrata</taxon>
        <taxon>Euteleostomi</taxon>
        <taxon>Archelosauria</taxon>
        <taxon>Archosauria</taxon>
        <taxon>Dinosauria</taxon>
        <taxon>Saurischia</taxon>
        <taxon>Theropoda</taxon>
        <taxon>Coelurosauria</taxon>
        <taxon>Aves</taxon>
        <taxon>Neognathae</taxon>
        <taxon>Galloanserae</taxon>
        <taxon>Galliformes</taxon>
        <taxon>Phasianidae</taxon>
        <taxon>Phasianinae</taxon>
        <taxon>Gallus</taxon>
    </lineage>
</organism>
<reference key="1">
    <citation type="journal article" date="1989" name="Biochimie">
        <title>Structure of cDNA of cytosolic aspartate aminotransferase of chicken and its expression in E. coli.</title>
        <authorList>
            <person name="Mattes U."/>
            <person name="Jaussi R."/>
            <person name="Ziak M."/>
            <person name="Juretic N."/>
            <person name="Lindenmann J.-M."/>
            <person name="Christen P."/>
        </authorList>
    </citation>
    <scope>NUCLEOTIDE SEQUENCE [MRNA]</scope>
</reference>
<reference key="2">
    <citation type="journal article" date="1979" name="FEBS Lett.">
        <title>Primary structure of cytoplasmic aspartate aminotransferase from chicken heart and its homology with pig heart isoenzymes.</title>
        <authorList>
            <person name="Shlyapnikov S.V."/>
            <person name="Myasnikov A.N."/>
            <person name="Severin E.S."/>
            <person name="Myagkova M.A."/>
            <person name="Torchinsky Y.M."/>
            <person name="Braunstein A.E."/>
        </authorList>
    </citation>
    <scope>PROTEIN SEQUENCE OF 2-412</scope>
    <scope>ACETYLATION AT ALA-2</scope>
    <source>
        <tissue>Heart</tissue>
    </source>
</reference>
<reference key="3">
    <citation type="journal article" date="1980" name="Bioorg. Khim.">
        <title>Primary structure of cytoplasmic aspartate aminotransferase from chicken heart IV, Structure of cyanogen bromide peptides and the complete amino acid sequence of the protein.</title>
        <authorList>
            <person name="Shlyapnikov S.V."/>
            <person name="Myasnikov A.N."/>
            <person name="Severin E.S."/>
            <person name="Myagkova M.A."/>
            <person name="Demidkina T.V."/>
            <person name="Torchinsky Y.M."/>
            <person name="Braunstein A.E."/>
        </authorList>
    </citation>
    <scope>PROTEIN SEQUENCE OF 2-412</scope>
    <source>
        <tissue>Heart</tissue>
    </source>
</reference>
<reference key="4">
    <citation type="journal article" date="1990" name="Eur. J. Biochem.">
        <title>Structure of the genes of two homologous intracellularly heterotopic isoenzymes. Cytosolic and mitochondrial aspartate aminotransferase of chicken.</title>
        <authorList>
            <person name="Juretic N."/>
            <person name="Mattes U."/>
            <person name="Ziak M."/>
            <person name="Christen P."/>
            <person name="Jaussi R."/>
        </authorList>
    </citation>
    <scope>GENE STRUCTURE</scope>
    <source>
        <strain>White leghorn</strain>
    </source>
</reference>
<reference key="5">
    <citation type="journal article" date="1982" name="FEBS Lett.">
        <title>Three-dimensional structure at 3.2-A resolution of the complex of cytosolic aspartate aminotransferase from chicken heart with 2-oxoglutarate.</title>
        <authorList>
            <person name="Harutyunyan E.G."/>
            <person name="Malashkevich V.N."/>
            <person name="Tersyan S.S."/>
            <person name="Kochkina V.M."/>
            <person name="Torchinsky Y.M."/>
            <person name="Braunstein A.E."/>
        </authorList>
    </citation>
    <scope>X-RAY CRYSTALLOGRAPHY (3.2 ANGSTROMS) IN COMPLEX WITH 2-OXOGLUTARATE</scope>
</reference>
<reference key="6">
    <citation type="journal article" date="1980" name="Nature">
        <title>Electron density map of chicken heart cytosol aspartate transaminase at 3.5-A resolution.</title>
        <authorList>
            <person name="Borisov V.V."/>
            <person name="Borisova S.N."/>
            <person name="Sosfenov N.I."/>
            <person name="Vainshtein B.K."/>
        </authorList>
    </citation>
    <scope>X-RAY CRYSTALLOGRAPHY (3.5 ANGSTROMS)</scope>
</reference>
<reference key="7">
    <citation type="journal article" date="1995" name="J. Mol. Biol.">
        <title>Crystal structure of the closed form of chicken cytosolic aspartate aminotransferase at 1.9-A resolution.</title>
        <authorList>
            <person name="Malashkevich V.N."/>
            <person name="Strokopytov B.V."/>
            <person name="Borisov V.V."/>
            <person name="Dauter Z."/>
            <person name="Wilson K.S."/>
            <person name="Torchinsky Y.M."/>
        </authorList>
    </citation>
    <scope>X-RAY CRYSTALLOGRAPHY (1.9 ANGSTROMS) IN COMPLEX WITH PYRODOXAL PHOSPHATE AND MALEIC ACID</scope>
    <scope>COFACTOR</scope>
    <scope>PYRIDOXAL PHOSPHATE AT LYS-258</scope>
    <scope>SUBUNIT</scope>
</reference>
<comment type="function">
    <text evidence="1">Biosynthesis of L-glutamate from L-aspartate or L-cysteine. Important regulator of levels of glutamate, the major excitatory neurotransmitter of the vertebrate central nervous system. Acts as a scavenger of glutamate in brain neuroprotection. The aspartate aminotransferase activity is involved in hepatic glucose synthesis during development and in adipocyte glyceroneogenesis. Using L-cysteine as substrate, regulates levels of mercaptopyruvate, an important source of hydrogen sulfide. Mercaptopyruvate is converted into H(2)S via the action of 3-mercaptopyruvate sulfurtransferase (3MST). Hydrogen sulfide is an important synaptic modulator and neuroprotectant in the brain.</text>
</comment>
<comment type="catalytic activity">
    <reaction evidence="1">
        <text>L-aspartate + 2-oxoglutarate = oxaloacetate + L-glutamate</text>
        <dbReference type="Rhea" id="RHEA:21824"/>
        <dbReference type="ChEBI" id="CHEBI:16452"/>
        <dbReference type="ChEBI" id="CHEBI:16810"/>
        <dbReference type="ChEBI" id="CHEBI:29985"/>
        <dbReference type="ChEBI" id="CHEBI:29991"/>
        <dbReference type="EC" id="2.6.1.1"/>
    </reaction>
    <physiologicalReaction direction="left-to-right" evidence="1">
        <dbReference type="Rhea" id="RHEA:21825"/>
    </physiologicalReaction>
</comment>
<comment type="catalytic activity">
    <reaction evidence="1">
        <text>L-cysteine + 2-oxoglutarate = 2-oxo-3-sulfanylpropanoate + L-glutamate</text>
        <dbReference type="Rhea" id="RHEA:17441"/>
        <dbReference type="ChEBI" id="CHEBI:16810"/>
        <dbReference type="ChEBI" id="CHEBI:29985"/>
        <dbReference type="ChEBI" id="CHEBI:35235"/>
        <dbReference type="ChEBI" id="CHEBI:57678"/>
        <dbReference type="EC" id="2.6.1.3"/>
    </reaction>
    <physiologicalReaction direction="left-to-right" evidence="1">
        <dbReference type="Rhea" id="RHEA:17442"/>
    </physiologicalReaction>
</comment>
<comment type="catalytic activity">
    <reaction evidence="2">
        <text>(2S)-2-aminobutanoate + 2-oxoglutarate = 2-oxobutanoate + L-glutamate</text>
        <dbReference type="Rhea" id="RHEA:70223"/>
        <dbReference type="ChEBI" id="CHEBI:16763"/>
        <dbReference type="ChEBI" id="CHEBI:16810"/>
        <dbReference type="ChEBI" id="CHEBI:29985"/>
        <dbReference type="ChEBI" id="CHEBI:74359"/>
    </reaction>
    <physiologicalReaction direction="right-to-left" evidence="2">
        <dbReference type="Rhea" id="RHEA:70225"/>
    </physiologicalReaction>
</comment>
<comment type="catalytic activity">
    <reaction evidence="1">
        <text>3-sulfino-L-alanine + 2-oxoglutarate = 3-sulfinopyruvate + L-glutamate</text>
        <dbReference type="Rhea" id="RHEA:70295"/>
        <dbReference type="ChEBI" id="CHEBI:16810"/>
        <dbReference type="ChEBI" id="CHEBI:29985"/>
        <dbReference type="ChEBI" id="CHEBI:61085"/>
        <dbReference type="ChEBI" id="CHEBI:140699"/>
    </reaction>
    <physiologicalReaction direction="right-to-left" evidence="1">
        <dbReference type="Rhea" id="RHEA:70297"/>
    </physiologicalReaction>
</comment>
<comment type="cofactor">
    <cofactor evidence="5">
        <name>pyridoxal 5'-phosphate</name>
        <dbReference type="ChEBI" id="CHEBI:597326"/>
    </cofactor>
</comment>
<comment type="subunit">
    <text evidence="4 5">Homodimer.</text>
</comment>
<comment type="subcellular location">
    <subcellularLocation>
        <location>Cytoplasm</location>
    </subcellularLocation>
</comment>
<comment type="miscellaneous">
    <text>In eukaryotes there are cytoplasmic, mitochondrial and chloroplastic isozymes.</text>
</comment>
<comment type="similarity">
    <text evidence="7">Belongs to the class-I pyridoxal-phosphate-dependent aminotransferase family.</text>
</comment>